<evidence type="ECO:0000255" key="1">
    <source>
        <dbReference type="HAMAP-Rule" id="MF_01659"/>
    </source>
</evidence>
<accession>A6L313</accession>
<reference key="1">
    <citation type="journal article" date="2007" name="PLoS Biol.">
        <title>Evolution of symbiotic bacteria in the distal human intestine.</title>
        <authorList>
            <person name="Xu J."/>
            <person name="Mahowald M.A."/>
            <person name="Ley R.E."/>
            <person name="Lozupone C.A."/>
            <person name="Hamady M."/>
            <person name="Martens E.C."/>
            <person name="Henrissat B."/>
            <person name="Coutinho P.M."/>
            <person name="Minx P."/>
            <person name="Latreille P."/>
            <person name="Cordum H."/>
            <person name="Van Brunt A."/>
            <person name="Kim K."/>
            <person name="Fulton R.S."/>
            <person name="Fulton L.A."/>
            <person name="Clifton S.W."/>
            <person name="Wilson R.K."/>
            <person name="Knight R.D."/>
            <person name="Gordon J.I."/>
        </authorList>
    </citation>
    <scope>NUCLEOTIDE SEQUENCE [LARGE SCALE GENOMIC DNA]</scope>
    <source>
        <strain>ATCC 8482 / DSM 1447 / JCM 5826 / CCUG 4940 / NBRC 14291 / NCTC 11154</strain>
    </source>
</reference>
<proteinExistence type="inferred from homology"/>
<gene>
    <name evidence="1" type="primary">menD</name>
    <name type="ordered locus">BVU_2418</name>
</gene>
<name>MEND_PHOV8</name>
<organism>
    <name type="scientific">Phocaeicola vulgatus (strain ATCC 8482 / DSM 1447 / JCM 5826 / CCUG 4940 / NBRC 14291 / NCTC 11154)</name>
    <name type="common">Bacteroides vulgatus</name>
    <dbReference type="NCBI Taxonomy" id="435590"/>
    <lineage>
        <taxon>Bacteria</taxon>
        <taxon>Pseudomonadati</taxon>
        <taxon>Bacteroidota</taxon>
        <taxon>Bacteroidia</taxon>
        <taxon>Bacteroidales</taxon>
        <taxon>Bacteroidaceae</taxon>
        <taxon>Phocaeicola</taxon>
    </lineage>
</organism>
<keyword id="KW-0460">Magnesium</keyword>
<keyword id="KW-0464">Manganese</keyword>
<keyword id="KW-0474">Menaquinone biosynthesis</keyword>
<keyword id="KW-0479">Metal-binding</keyword>
<keyword id="KW-0786">Thiamine pyrophosphate</keyword>
<keyword id="KW-0808">Transferase</keyword>
<dbReference type="EC" id="2.2.1.9" evidence="1"/>
<dbReference type="EMBL" id="CP000139">
    <property type="protein sequence ID" value="ABR40077.1"/>
    <property type="molecule type" value="Genomic_DNA"/>
</dbReference>
<dbReference type="RefSeq" id="WP_005840489.1">
    <property type="nucleotide sequence ID" value="NZ_JANSWM010000041.1"/>
</dbReference>
<dbReference type="SMR" id="A6L313"/>
<dbReference type="STRING" id="435590.BVU_2418"/>
<dbReference type="PaxDb" id="435590-BVU_2418"/>
<dbReference type="DNASU" id="5303382"/>
<dbReference type="GeneID" id="5303382"/>
<dbReference type="KEGG" id="bvu:BVU_2418"/>
<dbReference type="eggNOG" id="COG1165">
    <property type="taxonomic scope" value="Bacteria"/>
</dbReference>
<dbReference type="HOGENOM" id="CLU_006051_3_0_10"/>
<dbReference type="BioCyc" id="BVUL435590:G1G59-2517-MONOMER"/>
<dbReference type="UniPathway" id="UPA00079"/>
<dbReference type="UniPathway" id="UPA01057">
    <property type="reaction ID" value="UER00164"/>
</dbReference>
<dbReference type="Proteomes" id="UP000002861">
    <property type="component" value="Chromosome"/>
</dbReference>
<dbReference type="GO" id="GO:0070204">
    <property type="term" value="F:2-succinyl-5-enolpyruvyl-6-hydroxy-3-cyclohexene-1-carboxylic-acid synthase activity"/>
    <property type="evidence" value="ECO:0007669"/>
    <property type="project" value="UniProtKB-UniRule"/>
</dbReference>
<dbReference type="GO" id="GO:0000287">
    <property type="term" value="F:magnesium ion binding"/>
    <property type="evidence" value="ECO:0007669"/>
    <property type="project" value="UniProtKB-UniRule"/>
</dbReference>
<dbReference type="GO" id="GO:0030145">
    <property type="term" value="F:manganese ion binding"/>
    <property type="evidence" value="ECO:0007669"/>
    <property type="project" value="UniProtKB-UniRule"/>
</dbReference>
<dbReference type="GO" id="GO:0030976">
    <property type="term" value="F:thiamine pyrophosphate binding"/>
    <property type="evidence" value="ECO:0007669"/>
    <property type="project" value="UniProtKB-UniRule"/>
</dbReference>
<dbReference type="GO" id="GO:0009234">
    <property type="term" value="P:menaquinone biosynthetic process"/>
    <property type="evidence" value="ECO:0007669"/>
    <property type="project" value="UniProtKB-UniRule"/>
</dbReference>
<dbReference type="CDD" id="cd07037">
    <property type="entry name" value="TPP_PYR_MenD"/>
    <property type="match status" value="1"/>
</dbReference>
<dbReference type="CDD" id="cd02009">
    <property type="entry name" value="TPP_SHCHC_synthase"/>
    <property type="match status" value="1"/>
</dbReference>
<dbReference type="Gene3D" id="3.40.50.970">
    <property type="match status" value="2"/>
</dbReference>
<dbReference type="Gene3D" id="3.40.50.1220">
    <property type="entry name" value="TPP-binding domain"/>
    <property type="match status" value="1"/>
</dbReference>
<dbReference type="HAMAP" id="MF_01659">
    <property type="entry name" value="MenD"/>
    <property type="match status" value="1"/>
</dbReference>
<dbReference type="InterPro" id="IPR004433">
    <property type="entry name" value="MenaQ_synth_MenD"/>
</dbReference>
<dbReference type="InterPro" id="IPR029061">
    <property type="entry name" value="THDP-binding"/>
</dbReference>
<dbReference type="InterPro" id="IPR012001">
    <property type="entry name" value="Thiamin_PyroP_enz_TPP-bd_dom"/>
</dbReference>
<dbReference type="NCBIfam" id="TIGR00173">
    <property type="entry name" value="menD"/>
    <property type="match status" value="1"/>
</dbReference>
<dbReference type="PANTHER" id="PTHR42916">
    <property type="entry name" value="2-SUCCINYL-5-ENOLPYRUVYL-6-HYDROXY-3-CYCLOHEXENE-1-CARBOXYLATE SYNTHASE"/>
    <property type="match status" value="1"/>
</dbReference>
<dbReference type="PANTHER" id="PTHR42916:SF1">
    <property type="entry name" value="PROTEIN PHYLLO, CHLOROPLASTIC"/>
    <property type="match status" value="1"/>
</dbReference>
<dbReference type="Pfam" id="PF02776">
    <property type="entry name" value="TPP_enzyme_N"/>
    <property type="match status" value="1"/>
</dbReference>
<dbReference type="PIRSF" id="PIRSF004983">
    <property type="entry name" value="MenD"/>
    <property type="match status" value="1"/>
</dbReference>
<dbReference type="SUPFAM" id="SSF52518">
    <property type="entry name" value="Thiamin diphosphate-binding fold (THDP-binding)"/>
    <property type="match status" value="2"/>
</dbReference>
<protein>
    <recommendedName>
        <fullName evidence="1">2-succinyl-5-enolpyruvyl-6-hydroxy-3-cyclohexene-1-carboxylate synthase</fullName>
        <shortName evidence="1">SEPHCHC synthase</shortName>
        <ecNumber evidence="1">2.2.1.9</ecNumber>
    </recommendedName>
    <alternativeName>
        <fullName evidence="1">Menaquinone biosynthesis protein MenD</fullName>
    </alternativeName>
</protein>
<feature type="chain" id="PRO_0000341717" description="2-succinyl-5-enolpyruvyl-6-hydroxy-3-cyclohexene-1-carboxylate synthase">
    <location>
        <begin position="1"/>
        <end position="557"/>
    </location>
</feature>
<sequence length="557" mass="62971">MYSDKKNILQLVALLKAHGVRKIVLCPGSRNAAIVHTLANIEDFTCYSVTDERSAGFFAIGLSLQGGGPAAVCCTSGSALLNLHPAVAEAFYQQVPLIVISADRPAAWIGQMDGQTLPQPHVFGTLVKMSVNLPEVHTEEDEWFCNRLINEAILETTHHGKGPVHINVPISEPIYRFTAKTLPEVRVITRYQGLSVYDRDYKELIERLNKYNKRMVVVGQMNLIYLFEKKYVKPLYKHFAWLTEHLGNQTIPGIPIKNFDAAVYSMTPERQEDMAPEILITYGGHIVSKQLKKYLRNHPPREHWHVAADGKIADLYGCLTTVIEMDPFEFLEKIAFLLDNKPTHYPLMWENYCKTIPMPDLAYSEISVIGKLIRALPEPCALHLANSSTVRYAQLFTVPPQVEICCNRGVNGIEGSLSTAIGYAAASSKLNFIIIGDLSFFYDMNALWNQNYGANIRILLLNNEGGEIFHTLPGMDKSSRSREFITAEHYTTAKGWAEERGFIYMKVTGEEELEEAMQPFTSPETRMQPMLLEVFTDKEKDTTLLREYYHGLKNKNE</sequence>
<comment type="function">
    <text evidence="1">Catalyzes the thiamine diphosphate-dependent decarboxylation of 2-oxoglutarate and the subsequent addition of the resulting succinic semialdehyde-thiamine pyrophosphate anion to isochorismate to yield 2-succinyl-5-enolpyruvyl-6-hydroxy-3-cyclohexene-1-carboxylate (SEPHCHC).</text>
</comment>
<comment type="catalytic activity">
    <reaction evidence="1">
        <text>isochorismate + 2-oxoglutarate + H(+) = 5-enolpyruvoyl-6-hydroxy-2-succinyl-cyclohex-3-ene-1-carboxylate + CO2</text>
        <dbReference type="Rhea" id="RHEA:25593"/>
        <dbReference type="ChEBI" id="CHEBI:15378"/>
        <dbReference type="ChEBI" id="CHEBI:16526"/>
        <dbReference type="ChEBI" id="CHEBI:16810"/>
        <dbReference type="ChEBI" id="CHEBI:29780"/>
        <dbReference type="ChEBI" id="CHEBI:58818"/>
        <dbReference type="EC" id="2.2.1.9"/>
    </reaction>
</comment>
<comment type="cofactor">
    <cofactor evidence="1">
        <name>Mg(2+)</name>
        <dbReference type="ChEBI" id="CHEBI:18420"/>
    </cofactor>
    <cofactor evidence="1">
        <name>Mn(2+)</name>
        <dbReference type="ChEBI" id="CHEBI:29035"/>
    </cofactor>
</comment>
<comment type="cofactor">
    <cofactor evidence="1">
        <name>thiamine diphosphate</name>
        <dbReference type="ChEBI" id="CHEBI:58937"/>
    </cofactor>
    <text evidence="1">Binds 1 thiamine pyrophosphate per subunit.</text>
</comment>
<comment type="pathway">
    <text evidence="1">Quinol/quinone metabolism; 1,4-dihydroxy-2-naphthoate biosynthesis; 1,4-dihydroxy-2-naphthoate from chorismate: step 2/7.</text>
</comment>
<comment type="pathway">
    <text evidence="1">Quinol/quinone metabolism; menaquinone biosynthesis.</text>
</comment>
<comment type="subunit">
    <text evidence="1">Homodimer.</text>
</comment>
<comment type="similarity">
    <text evidence="1">Belongs to the TPP enzyme family. MenD subfamily.</text>
</comment>